<comment type="function">
    <text evidence="1">Protein S19 forms a complex with S13 that binds strongly to the 16S ribosomal RNA.</text>
</comment>
<comment type="similarity">
    <text evidence="1">Belongs to the universal ribosomal protein uS19 family.</text>
</comment>
<evidence type="ECO:0000255" key="1">
    <source>
        <dbReference type="HAMAP-Rule" id="MF_00531"/>
    </source>
</evidence>
<evidence type="ECO:0000305" key="2"/>
<sequence length="91" mass="10108">MARSVKKGPFCDAHLLKKVEAAAASRDKKPIKTWSRRSTILPDFIGLTIAVHNGRQHVPVYISENMVGHKLGEFALTRTFKGHAADKKAKK</sequence>
<name>RS19_PARXL</name>
<protein>
    <recommendedName>
        <fullName evidence="1">Small ribosomal subunit protein uS19</fullName>
    </recommendedName>
    <alternativeName>
        <fullName evidence="2">30S ribosomal protein S19</fullName>
    </alternativeName>
</protein>
<feature type="chain" id="PRO_0000265339" description="Small ribosomal subunit protein uS19">
    <location>
        <begin position="1"/>
        <end position="91"/>
    </location>
</feature>
<reference key="1">
    <citation type="journal article" date="2006" name="Proc. Natl. Acad. Sci. U.S.A.">
        <title>Burkholderia xenovorans LB400 harbors a multi-replicon, 9.73-Mbp genome shaped for versatility.</title>
        <authorList>
            <person name="Chain P.S.G."/>
            <person name="Denef V.J."/>
            <person name="Konstantinidis K.T."/>
            <person name="Vergez L.M."/>
            <person name="Agullo L."/>
            <person name="Reyes V.L."/>
            <person name="Hauser L."/>
            <person name="Cordova M."/>
            <person name="Gomez L."/>
            <person name="Gonzalez M."/>
            <person name="Land M."/>
            <person name="Lao V."/>
            <person name="Larimer F."/>
            <person name="LiPuma J.J."/>
            <person name="Mahenthiralingam E."/>
            <person name="Malfatti S.A."/>
            <person name="Marx C.J."/>
            <person name="Parnell J.J."/>
            <person name="Ramette A."/>
            <person name="Richardson P."/>
            <person name="Seeger M."/>
            <person name="Smith D."/>
            <person name="Spilker T."/>
            <person name="Sul W.J."/>
            <person name="Tsoi T.V."/>
            <person name="Ulrich L.E."/>
            <person name="Zhulin I.B."/>
            <person name="Tiedje J.M."/>
        </authorList>
    </citation>
    <scope>NUCLEOTIDE SEQUENCE [LARGE SCALE GENOMIC DNA]</scope>
    <source>
        <strain>LB400</strain>
    </source>
</reference>
<organism>
    <name type="scientific">Paraburkholderia xenovorans (strain LB400)</name>
    <dbReference type="NCBI Taxonomy" id="266265"/>
    <lineage>
        <taxon>Bacteria</taxon>
        <taxon>Pseudomonadati</taxon>
        <taxon>Pseudomonadota</taxon>
        <taxon>Betaproteobacteria</taxon>
        <taxon>Burkholderiales</taxon>
        <taxon>Burkholderiaceae</taxon>
        <taxon>Paraburkholderia</taxon>
    </lineage>
</organism>
<dbReference type="EMBL" id="CP000270">
    <property type="protein sequence ID" value="ABE32615.1"/>
    <property type="molecule type" value="Genomic_DNA"/>
</dbReference>
<dbReference type="RefSeq" id="WP_004199273.1">
    <property type="nucleotide sequence ID" value="NZ_CP008760.1"/>
</dbReference>
<dbReference type="SMR" id="Q13TH4"/>
<dbReference type="STRING" id="266265.Bxe_A0318"/>
<dbReference type="GeneID" id="98107156"/>
<dbReference type="KEGG" id="bxb:DR64_2488"/>
<dbReference type="KEGG" id="bxe:Bxe_A0318"/>
<dbReference type="eggNOG" id="COG0185">
    <property type="taxonomic scope" value="Bacteria"/>
</dbReference>
<dbReference type="OrthoDB" id="9797833at2"/>
<dbReference type="Proteomes" id="UP000001817">
    <property type="component" value="Chromosome 1"/>
</dbReference>
<dbReference type="GO" id="GO:0005737">
    <property type="term" value="C:cytoplasm"/>
    <property type="evidence" value="ECO:0007669"/>
    <property type="project" value="UniProtKB-ARBA"/>
</dbReference>
<dbReference type="GO" id="GO:0015935">
    <property type="term" value="C:small ribosomal subunit"/>
    <property type="evidence" value="ECO:0007669"/>
    <property type="project" value="InterPro"/>
</dbReference>
<dbReference type="GO" id="GO:0019843">
    <property type="term" value="F:rRNA binding"/>
    <property type="evidence" value="ECO:0007669"/>
    <property type="project" value="UniProtKB-UniRule"/>
</dbReference>
<dbReference type="GO" id="GO:0003735">
    <property type="term" value="F:structural constituent of ribosome"/>
    <property type="evidence" value="ECO:0007669"/>
    <property type="project" value="InterPro"/>
</dbReference>
<dbReference type="GO" id="GO:0000028">
    <property type="term" value="P:ribosomal small subunit assembly"/>
    <property type="evidence" value="ECO:0007669"/>
    <property type="project" value="TreeGrafter"/>
</dbReference>
<dbReference type="GO" id="GO:0006412">
    <property type="term" value="P:translation"/>
    <property type="evidence" value="ECO:0007669"/>
    <property type="project" value="UniProtKB-UniRule"/>
</dbReference>
<dbReference type="FunFam" id="3.30.860.10:FF:000001">
    <property type="entry name" value="30S ribosomal protein S19"/>
    <property type="match status" value="1"/>
</dbReference>
<dbReference type="Gene3D" id="3.30.860.10">
    <property type="entry name" value="30s Ribosomal Protein S19, Chain A"/>
    <property type="match status" value="1"/>
</dbReference>
<dbReference type="HAMAP" id="MF_00531">
    <property type="entry name" value="Ribosomal_uS19"/>
    <property type="match status" value="1"/>
</dbReference>
<dbReference type="InterPro" id="IPR002222">
    <property type="entry name" value="Ribosomal_uS19"/>
</dbReference>
<dbReference type="InterPro" id="IPR005732">
    <property type="entry name" value="Ribosomal_uS19_bac-type"/>
</dbReference>
<dbReference type="InterPro" id="IPR020934">
    <property type="entry name" value="Ribosomal_uS19_CS"/>
</dbReference>
<dbReference type="InterPro" id="IPR023575">
    <property type="entry name" value="Ribosomal_uS19_SF"/>
</dbReference>
<dbReference type="NCBIfam" id="TIGR01050">
    <property type="entry name" value="rpsS_bact"/>
    <property type="match status" value="1"/>
</dbReference>
<dbReference type="PANTHER" id="PTHR11880">
    <property type="entry name" value="RIBOSOMAL PROTEIN S19P FAMILY MEMBER"/>
    <property type="match status" value="1"/>
</dbReference>
<dbReference type="PANTHER" id="PTHR11880:SF8">
    <property type="entry name" value="SMALL RIBOSOMAL SUBUNIT PROTEIN US19M"/>
    <property type="match status" value="1"/>
</dbReference>
<dbReference type="Pfam" id="PF00203">
    <property type="entry name" value="Ribosomal_S19"/>
    <property type="match status" value="1"/>
</dbReference>
<dbReference type="PIRSF" id="PIRSF002144">
    <property type="entry name" value="Ribosomal_S19"/>
    <property type="match status" value="1"/>
</dbReference>
<dbReference type="PRINTS" id="PR00975">
    <property type="entry name" value="RIBOSOMALS19"/>
</dbReference>
<dbReference type="SUPFAM" id="SSF54570">
    <property type="entry name" value="Ribosomal protein S19"/>
    <property type="match status" value="1"/>
</dbReference>
<dbReference type="PROSITE" id="PS00323">
    <property type="entry name" value="RIBOSOMAL_S19"/>
    <property type="match status" value="1"/>
</dbReference>
<gene>
    <name evidence="1" type="primary">rpsS</name>
    <name type="ordered locus">Bxeno_A4077</name>
    <name type="ORF">Bxe_A0318</name>
</gene>
<accession>Q13TH4</accession>
<proteinExistence type="inferred from homology"/>
<keyword id="KW-1185">Reference proteome</keyword>
<keyword id="KW-0687">Ribonucleoprotein</keyword>
<keyword id="KW-0689">Ribosomal protein</keyword>
<keyword id="KW-0694">RNA-binding</keyword>
<keyword id="KW-0699">rRNA-binding</keyword>